<sequence length="1054" mass="117620">MGTAQVLPGILQKHCCILPDRNTESQCTLCGEPEEEEAGDLVQPGISFPGPAEEDLDPQYSWSPTQHFNEERYSPAPRSMKGLSGSRTQPPLCSGHTCGLAPPEDCEHLHHGPDARPPYLLSPADSCPGGRHRCSPRSSVHSECVMMPVVLGDHVSSSTFPRMHYSSHYDTRDDCAVAHAGAKINRIPANLLDQFEKQLPLHRDGFHTLQYQRTSAAAEQRSESPGRIRHLVHSVQKLFTKSHSLEGSSKSNANGTKADGRADDHHHAHHAKHSKRSKSKERKPEGKPRPGMSSWWSSDDNLDSDSTYRTPSVLNRHHLGPVAHCYPDALQSPFGDLSLKTSKSNNDVKCSACEGLALTPDAKYLKRSSWSTLTVSQAKEAYRKSSLNLDKPLLHQDAKPALRPCHYLQVPQDEWGGYPTGGKDEEIPCRRMRSGSYIKAMGDEESGESDSSPKTSPKSAILPEPLLKSIGQRPLGEHQTQTYLQAASDVPVGHSLDPAANYNSPKFRSRNQSYMRAVSTLSQASCVSQVSEAEINGQFESVCESVFSEVESQAMDALDLPGCFRTRSHSYLRAIQAGYSQDDECIPMMTPSDITSTIRSTAAVSYTNYKKTPPPVPPRTTSKPLISVTAQSSTESTQDAYQDSRAQRMSPWPQDSRGLYNSTDSLDSNKAMNLALETAAAQRHLPESQSSSVRTSDKAILVSKAEELLKSRCSSIGIQDSEFPEHQPYPRSDVETATDSDTESRGLREYHSVGVQVEDEKRHGRFKRSNSVTAAVQADLELEGFPGHITTEDKGLQFGSSFQRHSEPSTPTQYSAVRTVRTQGLFSYREDYRTQVDTSTLPPPDPWLEPAIDTVETGRMSPCRRDGSWFLKLLHAETKRMEGWCKEMEREAEENDLSEEILGKIRSAVGSAQLLMSQKFQQFYWLCQQNMDPSAMPRPTSQDLAGYWDMLQLSIEDVSMKFDELQRLRLNDWKMMESPERKEERKVPPPIPKKPPKGKFPITREKSLDLPDRQRQEARRRLMAAKRAASFRQNSASERADSIEIYIPEAQTRL</sequence>
<name>DLGP2_HUMAN</name>
<reference key="1">
    <citation type="journal article" date="2000" name="Eur. J. Hum. Genet.">
        <title>Positional cloning and characterization of the human DLGAP2 gene and its exclusion in progressive epilepsy with mental retardation.</title>
        <authorList>
            <person name="Ranta S."/>
            <person name="Zhang Y."/>
            <person name="Ross B."/>
            <person name="Takkunen E."/>
            <person name="Hirvasniemi A."/>
            <person name="de la Chapelle A."/>
            <person name="Gilliam T.C."/>
            <person name="Lehesjoki A.-E."/>
        </authorList>
    </citation>
    <scope>NUCLEOTIDE SEQUENCE [MRNA] (ISOFORM 3)</scope>
    <scope>NUCLEOTIDE SEQUENCE [MRNA] OF 36-1054 (ISOFORM 1)</scope>
    <scope>NUCLEOTIDE SEQUENCE [MRNA] OF 98-1054 (ISOFORM 2)</scope>
    <source>
        <tissue>Brain</tissue>
        <tissue>Testis</tissue>
    </source>
</reference>
<reference key="2">
    <citation type="journal article" date="2006" name="Nature">
        <title>DNA sequence and analysis of human chromosome 8.</title>
        <authorList>
            <person name="Nusbaum C."/>
            <person name="Mikkelsen T.S."/>
            <person name="Zody M.C."/>
            <person name="Asakawa S."/>
            <person name="Taudien S."/>
            <person name="Garber M."/>
            <person name="Kodira C.D."/>
            <person name="Schueler M.G."/>
            <person name="Shimizu A."/>
            <person name="Whittaker C.A."/>
            <person name="Chang J.L."/>
            <person name="Cuomo C.A."/>
            <person name="Dewar K."/>
            <person name="FitzGerald M.G."/>
            <person name="Yang X."/>
            <person name="Allen N.R."/>
            <person name="Anderson S."/>
            <person name="Asakawa T."/>
            <person name="Blechschmidt K."/>
            <person name="Bloom T."/>
            <person name="Borowsky M.L."/>
            <person name="Butler J."/>
            <person name="Cook A."/>
            <person name="Corum B."/>
            <person name="DeArellano K."/>
            <person name="DeCaprio D."/>
            <person name="Dooley K.T."/>
            <person name="Dorris L. III"/>
            <person name="Engels R."/>
            <person name="Gloeckner G."/>
            <person name="Hafez N."/>
            <person name="Hagopian D.S."/>
            <person name="Hall J.L."/>
            <person name="Ishikawa S.K."/>
            <person name="Jaffe D.B."/>
            <person name="Kamat A."/>
            <person name="Kudoh J."/>
            <person name="Lehmann R."/>
            <person name="Lokitsang T."/>
            <person name="Macdonald P."/>
            <person name="Major J.E."/>
            <person name="Matthews C.D."/>
            <person name="Mauceli E."/>
            <person name="Menzel U."/>
            <person name="Mihalev A.H."/>
            <person name="Minoshima S."/>
            <person name="Murayama Y."/>
            <person name="Naylor J.W."/>
            <person name="Nicol R."/>
            <person name="Nguyen C."/>
            <person name="O'Leary S.B."/>
            <person name="O'Neill K."/>
            <person name="Parker S.C.J."/>
            <person name="Polley A."/>
            <person name="Raymond C.K."/>
            <person name="Reichwald K."/>
            <person name="Rodriguez J."/>
            <person name="Sasaki T."/>
            <person name="Schilhabel M."/>
            <person name="Siddiqui R."/>
            <person name="Smith C.L."/>
            <person name="Sneddon T.P."/>
            <person name="Talamas J.A."/>
            <person name="Tenzin P."/>
            <person name="Topham K."/>
            <person name="Venkataraman V."/>
            <person name="Wen G."/>
            <person name="Yamazaki S."/>
            <person name="Young S.K."/>
            <person name="Zeng Q."/>
            <person name="Zimmer A.R."/>
            <person name="Rosenthal A."/>
            <person name="Birren B.W."/>
            <person name="Platzer M."/>
            <person name="Shimizu N."/>
            <person name="Lander E.S."/>
        </authorList>
    </citation>
    <scope>NUCLEOTIDE SEQUENCE [LARGE SCALE GENOMIC DNA]</scope>
</reference>
<reference key="3">
    <citation type="submission" date="2006-12" db="EMBL/GenBank/DDBJ databases">
        <authorList>
            <person name="Mural R.J."/>
            <person name="Istrail S."/>
            <person name="Sutton G.G."/>
            <person name="Florea L."/>
            <person name="Halpern A.L."/>
            <person name="Mobarry C.M."/>
            <person name="Lippert R."/>
            <person name="Walenz B."/>
            <person name="Shatkay H."/>
            <person name="Dew I."/>
            <person name="Miller J.R."/>
            <person name="Flanigan M.J."/>
            <person name="Edwards N.J."/>
            <person name="Bolanos R."/>
            <person name="Fasulo D."/>
            <person name="Halldorsson B.V."/>
            <person name="Hannenhalli S."/>
            <person name="Turner R."/>
            <person name="Yooseph S."/>
            <person name="Lu F."/>
            <person name="Nusskern D.R."/>
            <person name="Shue B.C."/>
            <person name="Zheng X.H."/>
            <person name="Zhong F."/>
            <person name="Delcher A.L."/>
            <person name="Huson D.H."/>
            <person name="Kravitz S.A."/>
            <person name="Mouchard L."/>
            <person name="Reinert K."/>
            <person name="Remington K.A."/>
            <person name="Clark A.G."/>
            <person name="Waterman M.S."/>
            <person name="Eichler E.E."/>
            <person name="Adams M.D."/>
            <person name="Hunkapiller M.W."/>
            <person name="Myers E.W."/>
            <person name="Venter J.C."/>
        </authorList>
    </citation>
    <scope>NUCLEOTIDE SEQUENCE [LARGE SCALE GENOMIC DNA]</scope>
</reference>
<reference key="4">
    <citation type="journal article" date="2004" name="Genome Res.">
        <title>The status, quality, and expansion of the NIH full-length cDNA project: the Mammalian Gene Collection (MGC).</title>
        <authorList>
            <consortium name="The MGC Project Team"/>
        </authorList>
    </citation>
    <scope>NUCLEOTIDE SEQUENCE [LARGE SCALE MRNA] (ISOFORM 3)</scope>
</reference>
<reference key="5">
    <citation type="journal article" date="1997" name="Genes Cells">
        <title>DAP-1, a novel protein that interacts with the guanylate kinase-like domains of hDLG and PSD-95.</title>
        <authorList>
            <person name="Satoh K."/>
            <person name="Yanai H."/>
            <person name="Senda T."/>
            <person name="Kohu K."/>
            <person name="Nakamura T."/>
            <person name="Okumura N."/>
            <person name="Matsumine A."/>
            <person name="Kobayashi S."/>
            <person name="Toyoshima K."/>
            <person name="Akiyama T."/>
        </authorList>
    </citation>
    <scope>NUCLEOTIDE SEQUENCE [MRNA] OF 517-1054 (ISOFORMS 1 AND 3)</scope>
    <source>
        <tissue>Brain</tissue>
    </source>
</reference>
<dbReference type="EMBL" id="AF119817">
    <property type="protein sequence ID" value="AAF34344.1"/>
    <property type="molecule type" value="mRNA"/>
</dbReference>
<dbReference type="EMBL" id="AF119818">
    <property type="protein sequence ID" value="AAF34345.1"/>
    <property type="molecule type" value="mRNA"/>
</dbReference>
<dbReference type="EMBL" id="AF009204">
    <property type="protein sequence ID" value="AAB71661.1"/>
    <property type="molecule type" value="mRNA"/>
</dbReference>
<dbReference type="EMBL" id="AC100797">
    <property type="status" value="NOT_ANNOTATED_CDS"/>
    <property type="molecule type" value="Genomic_DNA"/>
</dbReference>
<dbReference type="EMBL" id="AC026950">
    <property type="status" value="NOT_ANNOTATED_CDS"/>
    <property type="molecule type" value="Genomic_DNA"/>
</dbReference>
<dbReference type="EMBL" id="AC110288">
    <property type="status" value="NOT_ANNOTATED_CDS"/>
    <property type="molecule type" value="Genomic_DNA"/>
</dbReference>
<dbReference type="EMBL" id="CH471181">
    <property type="protein sequence ID" value="EAW51474.1"/>
    <property type="molecule type" value="Genomic_DNA"/>
</dbReference>
<dbReference type="EMBL" id="CH471181">
    <property type="protein sequence ID" value="EAW51475.1"/>
    <property type="status" value="ALT_SEQ"/>
    <property type="molecule type" value="Genomic_DNA"/>
</dbReference>
<dbReference type="EMBL" id="BC141862">
    <property type="protein sequence ID" value="AAI41863.1"/>
    <property type="molecule type" value="mRNA"/>
</dbReference>
<dbReference type="EMBL" id="AB000275">
    <property type="protein sequence ID" value="BAA23256.1"/>
    <property type="molecule type" value="mRNA"/>
</dbReference>
<dbReference type="PIR" id="T03306">
    <property type="entry name" value="T03306"/>
</dbReference>
<dbReference type="RefSeq" id="NP_004736.2">
    <property type="nucleotide sequence ID" value="NM_004745.4"/>
</dbReference>
<dbReference type="SMR" id="Q9P1A6"/>
<dbReference type="BioGRID" id="114659">
    <property type="interactions" value="30"/>
</dbReference>
<dbReference type="FunCoup" id="Q9P1A6">
    <property type="interactions" value="69"/>
</dbReference>
<dbReference type="IntAct" id="Q9P1A6">
    <property type="interactions" value="25"/>
</dbReference>
<dbReference type="MINT" id="Q9P1A6"/>
<dbReference type="STRING" id="9606.ENSP00000489774"/>
<dbReference type="GlyCosmos" id="Q9P1A6">
    <property type="glycosylation" value="1 site, 1 glycan"/>
</dbReference>
<dbReference type="GlyGen" id="Q9P1A6">
    <property type="glycosylation" value="3 sites, 2 N-linked glycans (2 sites), 1 O-linked glycan (1 site)"/>
</dbReference>
<dbReference type="iPTMnet" id="Q9P1A6"/>
<dbReference type="PhosphoSitePlus" id="Q9P1A6"/>
<dbReference type="BioMuta" id="DLGAP2"/>
<dbReference type="DMDM" id="160395585"/>
<dbReference type="jPOST" id="Q9P1A6"/>
<dbReference type="MassIVE" id="Q9P1A6"/>
<dbReference type="PaxDb" id="9606-ENSP00000400258"/>
<dbReference type="PeptideAtlas" id="Q9P1A6"/>
<dbReference type="ProteomicsDB" id="83641">
    <molecule id="Q9P1A6-1"/>
</dbReference>
<dbReference type="ProteomicsDB" id="83642">
    <molecule id="Q9P1A6-2"/>
</dbReference>
<dbReference type="ProteomicsDB" id="83643">
    <molecule id="Q9P1A6-3"/>
</dbReference>
<dbReference type="ABCD" id="Q9P1A6">
    <property type="antibodies" value="1 sequenced antibody"/>
</dbReference>
<dbReference type="Antibodypedia" id="21955">
    <property type="antibodies" value="81 antibodies from 26 providers"/>
</dbReference>
<dbReference type="Ensembl" id="ENST00000421627.7">
    <molecule id="Q9P1A6-1"/>
    <property type="protein sequence ID" value="ENSP00000400258.3"/>
    <property type="gene ID" value="ENSG00000198010.13"/>
</dbReference>
<dbReference type="UCSC" id="uc003wpl.4">
    <molecule id="Q9P1A6-1"/>
    <property type="organism name" value="human"/>
</dbReference>
<dbReference type="AGR" id="HGNC:2906"/>
<dbReference type="GeneCards" id="DLGAP2"/>
<dbReference type="HGNC" id="HGNC:2906">
    <property type="gene designation" value="DLGAP2"/>
</dbReference>
<dbReference type="HPA" id="ENSG00000198010">
    <property type="expression patterns" value="Tissue enhanced (brain, testis)"/>
</dbReference>
<dbReference type="MalaCards" id="DLGAP2"/>
<dbReference type="MIM" id="605438">
    <property type="type" value="gene"/>
</dbReference>
<dbReference type="neXtProt" id="NX_Q9P1A6"/>
<dbReference type="OpenTargets" id="ENSG00000198010"/>
<dbReference type="PharmGKB" id="PA27362"/>
<dbReference type="VEuPathDB" id="HostDB:ENSG00000198010"/>
<dbReference type="eggNOG" id="KOG3971">
    <property type="taxonomic scope" value="Eukaryota"/>
</dbReference>
<dbReference type="GeneTree" id="ENSGT00940000157913"/>
<dbReference type="InParanoid" id="Q9P1A6"/>
<dbReference type="OrthoDB" id="10036956at2759"/>
<dbReference type="PAN-GO" id="Q9P1A6">
    <property type="GO annotations" value="4 GO annotations based on evolutionary models"/>
</dbReference>
<dbReference type="PhylomeDB" id="Q9P1A6"/>
<dbReference type="TreeFam" id="TF321382"/>
<dbReference type="PathwayCommons" id="Q9P1A6"/>
<dbReference type="Reactome" id="R-HSA-6794361">
    <property type="pathway name" value="Neurexins and neuroligins"/>
</dbReference>
<dbReference type="SignaLink" id="Q9P1A6"/>
<dbReference type="SIGNOR" id="Q9P1A6"/>
<dbReference type="BioGRID-ORCS" id="9228">
    <property type="hits" value="14 hits in 1145 CRISPR screens"/>
</dbReference>
<dbReference type="CD-CODE" id="FB4E32DD">
    <property type="entry name" value="Presynaptic clusters and postsynaptic densities"/>
</dbReference>
<dbReference type="ChiTaRS" id="DLGAP2">
    <property type="organism name" value="human"/>
</dbReference>
<dbReference type="GeneWiki" id="DLGAP2"/>
<dbReference type="GenomeRNAi" id="9228"/>
<dbReference type="Pharos" id="Q9P1A6">
    <property type="development level" value="Tbio"/>
</dbReference>
<dbReference type="PRO" id="PR:Q9P1A6"/>
<dbReference type="Proteomes" id="UP000005640">
    <property type="component" value="Chromosome 8"/>
</dbReference>
<dbReference type="RNAct" id="Q9P1A6">
    <property type="molecule type" value="protein"/>
</dbReference>
<dbReference type="Bgee" id="ENSG00000198010">
    <property type="expression patterns" value="Expressed in left testis and 91 other cell types or tissues"/>
</dbReference>
<dbReference type="ExpressionAtlas" id="Q9P1A6">
    <property type="expression patterns" value="baseline and differential"/>
</dbReference>
<dbReference type="GO" id="GO:0098978">
    <property type="term" value="C:glutamatergic synapse"/>
    <property type="evidence" value="ECO:0000318"/>
    <property type="project" value="GO_Central"/>
</dbReference>
<dbReference type="GO" id="GO:0005883">
    <property type="term" value="C:neurofilament"/>
    <property type="evidence" value="ECO:0000303"/>
    <property type="project" value="UniProtKB"/>
</dbReference>
<dbReference type="GO" id="GO:0005886">
    <property type="term" value="C:plasma membrane"/>
    <property type="evidence" value="ECO:0000304"/>
    <property type="project" value="Reactome"/>
</dbReference>
<dbReference type="GO" id="GO:0014069">
    <property type="term" value="C:postsynaptic density"/>
    <property type="evidence" value="ECO:0007669"/>
    <property type="project" value="UniProtKB-SubCell"/>
</dbReference>
<dbReference type="GO" id="GO:0099572">
    <property type="term" value="C:postsynaptic specialization"/>
    <property type="evidence" value="ECO:0000318"/>
    <property type="project" value="GO_Central"/>
</dbReference>
<dbReference type="GO" id="GO:0060090">
    <property type="term" value="F:molecular adaptor activity"/>
    <property type="evidence" value="ECO:0000318"/>
    <property type="project" value="GO_Central"/>
</dbReference>
<dbReference type="GO" id="GO:0050804">
    <property type="term" value="P:modulation of chemical synaptic transmission"/>
    <property type="evidence" value="ECO:0000318"/>
    <property type="project" value="GO_Central"/>
</dbReference>
<dbReference type="GO" id="GO:0007270">
    <property type="term" value="P:neuron-neuron synaptic transmission"/>
    <property type="evidence" value="ECO:0000303"/>
    <property type="project" value="UniProtKB"/>
</dbReference>
<dbReference type="InterPro" id="IPR005026">
    <property type="entry name" value="SAPAP"/>
</dbReference>
<dbReference type="PANTHER" id="PTHR12353:SF3">
    <property type="entry name" value="DISKS LARGE-ASSOCIATED PROTEIN 2"/>
    <property type="match status" value="1"/>
</dbReference>
<dbReference type="PANTHER" id="PTHR12353">
    <property type="entry name" value="DISKS LARGE-ASSOCIATED PROTEIN DAP SAP90/PSD-95-ASSOCIATED PROTEIN"/>
    <property type="match status" value="1"/>
</dbReference>
<dbReference type="Pfam" id="PF03359">
    <property type="entry name" value="GKAP"/>
    <property type="match status" value="1"/>
</dbReference>
<protein>
    <recommendedName>
        <fullName evidence="8">Disks large-associated protein 2</fullName>
        <shortName>DAP-2</shortName>
    </recommendedName>
    <alternativeName>
        <fullName>PSD-95/SAP90-binding protein 2</fullName>
    </alternativeName>
    <alternativeName>
        <fullName>SAP90/PSD-95-associated protein 2</fullName>
        <shortName>SAPAP2</shortName>
    </alternativeName>
</protein>
<proteinExistence type="evidence at protein level"/>
<feature type="chain" id="PRO_0000174291" description="Disks large-associated protein 2">
    <location>
        <begin position="1"/>
        <end position="1054"/>
    </location>
</feature>
<feature type="region of interest" description="Disordered" evidence="4">
    <location>
        <begin position="32"/>
        <end position="87"/>
    </location>
</feature>
<feature type="region of interest" description="Disordered" evidence="4">
    <location>
        <begin position="242"/>
        <end position="301"/>
    </location>
</feature>
<feature type="region of interest" description="Disordered" evidence="4">
    <location>
        <begin position="442"/>
        <end position="464"/>
    </location>
</feature>
<feature type="region of interest" description="Disordered" evidence="4">
    <location>
        <begin position="609"/>
        <end position="666"/>
    </location>
</feature>
<feature type="region of interest" description="Disordered" evidence="4">
    <location>
        <begin position="719"/>
        <end position="746"/>
    </location>
</feature>
<feature type="region of interest" description="Disordered" evidence="4">
    <location>
        <begin position="977"/>
        <end position="1021"/>
    </location>
</feature>
<feature type="compositionally biased region" description="Polar residues" evidence="4">
    <location>
        <begin position="242"/>
        <end position="255"/>
    </location>
</feature>
<feature type="compositionally biased region" description="Basic residues" evidence="4">
    <location>
        <begin position="267"/>
        <end position="281"/>
    </location>
</feature>
<feature type="compositionally biased region" description="Low complexity" evidence="4">
    <location>
        <begin position="289"/>
        <end position="299"/>
    </location>
</feature>
<feature type="compositionally biased region" description="Polar residues" evidence="4">
    <location>
        <begin position="628"/>
        <end position="641"/>
    </location>
</feature>
<feature type="compositionally biased region" description="Basic and acidic residues" evidence="4">
    <location>
        <begin position="977"/>
        <end position="987"/>
    </location>
</feature>
<feature type="compositionally biased region" description="Basic and acidic residues" evidence="4">
    <location>
        <begin position="1002"/>
        <end position="1020"/>
    </location>
</feature>
<feature type="modified residue" description="Phosphoserine" evidence="3">
    <location>
        <position position="298"/>
    </location>
</feature>
<feature type="modified residue" description="Phosphoserine" evidence="2">
    <location>
        <position position="304"/>
    </location>
</feature>
<feature type="modified residue" description="Phosphoserine" evidence="2">
    <location>
        <position position="386"/>
    </location>
</feature>
<feature type="modified residue" description="Phosphoserine" evidence="3">
    <location>
        <position position="452"/>
    </location>
</feature>
<feature type="modified residue" description="Phosphoserine" evidence="3">
    <location>
        <position position="662"/>
    </location>
</feature>
<feature type="modified residue" description="Phosphoserine" evidence="3">
    <location>
        <position position="665"/>
    </location>
</feature>
<feature type="modified residue" description="Phosphoserine" evidence="3">
    <location>
        <position position="668"/>
    </location>
</feature>
<feature type="modified residue" description="Phosphoserine" evidence="3">
    <location>
        <position position="715"/>
    </location>
</feature>
<feature type="modified residue" description="Phosphothreonine" evidence="3">
    <location>
        <position position="738"/>
    </location>
</feature>
<feature type="modified residue" description="Phosphoserine" evidence="3">
    <location>
        <position position="740"/>
    </location>
</feature>
<feature type="modified residue" description="Phosphoserine" evidence="3">
    <location>
        <position position="771"/>
    </location>
</feature>
<feature type="modified residue" description="Phosphoserine" evidence="3">
    <location>
        <position position="806"/>
    </location>
</feature>
<feature type="modified residue" description="Phosphoserine" evidence="2">
    <location>
        <position position="978"/>
    </location>
</feature>
<feature type="modified residue" description="Phosphoserine" evidence="3">
    <location>
        <position position="1007"/>
    </location>
</feature>
<feature type="splice variant" id="VSP_006011" description="In isoform 3." evidence="5 6 7">
    <location>
        <begin position="1"/>
        <end position="79"/>
    </location>
</feature>
<feature type="splice variant" id="VSP_006012" description="In isoform 2." evidence="5">
    <location>
        <begin position="720"/>
        <end position="733"/>
    </location>
</feature>
<feature type="sequence variant" id="VAR_023073" description="In dbSNP:rs2301963.">
    <original>P</original>
    <variation>Q</variation>
    <location>
        <position position="419"/>
    </location>
</feature>
<feature type="sequence variant" id="VAR_036750" description="In dbSNP:rs7463888.">
    <original>T</original>
    <variation>M</variation>
    <location>
        <position position="620"/>
    </location>
</feature>
<feature type="sequence conflict" description="In Ref. 3; EAW51474/EAW51475." evidence="8" ref="3">
    <original>P</original>
    <variation>Q</variation>
    <location>
        <position position="463"/>
    </location>
</feature>
<evidence type="ECO:0000250" key="1"/>
<evidence type="ECO:0000250" key="2">
    <source>
        <dbReference type="UniProtKB" id="P97837"/>
    </source>
</evidence>
<evidence type="ECO:0000250" key="3">
    <source>
        <dbReference type="UniProtKB" id="Q8BJ42"/>
    </source>
</evidence>
<evidence type="ECO:0000256" key="4">
    <source>
        <dbReference type="SAM" id="MobiDB-lite"/>
    </source>
</evidence>
<evidence type="ECO:0000303" key="5">
    <source>
    </source>
</evidence>
<evidence type="ECO:0000303" key="6">
    <source>
    </source>
</evidence>
<evidence type="ECO:0000303" key="7">
    <source>
    </source>
</evidence>
<evidence type="ECO:0000305" key="8"/>
<evidence type="ECO:0000312" key="9">
    <source>
        <dbReference type="HGNC" id="HGNC:2906"/>
    </source>
</evidence>
<comment type="function">
    <text>May play a role in the molecular organization of synapses and neuronal cell signaling. Could be an adapter protein linking ion channel to the subsynaptic cytoskeleton. May induce enrichment of PSD-95/SAP90 at the plasma membrane.</text>
</comment>
<comment type="subunit">
    <text evidence="1">Interacts with DLG1 and DLG4/PSD-95.</text>
</comment>
<comment type="interaction">
    <interactant intactId="EBI-1753397">
        <id>Q9P1A6</id>
    </interactant>
    <interactant intactId="EBI-401755">
        <id>P62993</id>
        <label>GRB2</label>
    </interactant>
    <organismsDiffer>false</organismsDiffer>
    <experiments>2</experiments>
</comment>
<comment type="interaction">
    <interactant intactId="EBI-1753397">
        <id>Q9P1A6</id>
    </interactant>
    <interactant intactId="EBI-10171697">
        <id>Q6A162</id>
        <label>KRT40</label>
    </interactant>
    <organismsDiffer>false</organismsDiffer>
    <experiments>4</experiments>
</comment>
<comment type="interaction">
    <interactant intactId="EBI-1753397">
        <id>Q9P1A6</id>
    </interactant>
    <interactant intactId="EBI-10172511">
        <id>Q9BYR5</id>
        <label>KRTAP4-2</label>
    </interactant>
    <organismsDiffer>false</organismsDiffer>
    <experiments>3</experiments>
</comment>
<comment type="interaction">
    <interactant intactId="EBI-1753397">
        <id>Q9P1A6</id>
    </interactant>
    <interactant intactId="EBI-389883">
        <id>P16333</id>
        <label>NCK1</label>
    </interactant>
    <organismsDiffer>false</organismsDiffer>
    <experiments>4</experiments>
</comment>
<comment type="interaction">
    <interactant intactId="EBI-12019838">
        <id>Q9P1A6-3</id>
    </interactant>
    <interactant intactId="EBI-11096309">
        <id>Q9NYB9-2</id>
        <label>ABI2</label>
    </interactant>
    <organismsDiffer>false</organismsDiffer>
    <experiments>3</experiments>
</comment>
<comment type="interaction">
    <interactant intactId="EBI-12019838">
        <id>Q9P1A6-3</id>
    </interactant>
    <interactant intactId="EBI-946046">
        <id>P54252</id>
        <label>ATXN3</label>
    </interactant>
    <organismsDiffer>false</organismsDiffer>
    <experiments>3</experiments>
</comment>
<comment type="interaction">
    <interactant intactId="EBI-12019838">
        <id>Q9P1A6-3</id>
    </interactant>
    <interactant intactId="EBI-2115097">
        <id>P07339</id>
        <label>CTSD</label>
    </interactant>
    <organismsDiffer>false</organismsDiffer>
    <experiments>3</experiments>
</comment>
<comment type="interaction">
    <interactant intactId="EBI-12019838">
        <id>Q9P1A6-3</id>
    </interactant>
    <interactant intactId="EBI-3867333">
        <id>A8MQ03</id>
        <label>CYSRT1</label>
    </interactant>
    <organismsDiffer>false</organismsDiffer>
    <experiments>3</experiments>
</comment>
<comment type="interaction">
    <interactant intactId="EBI-12019838">
        <id>Q9P1A6-3</id>
    </interactant>
    <interactant intactId="EBI-80426">
        <id>Q15700</id>
        <label>DLG2</label>
    </interactant>
    <organismsDiffer>false</organismsDiffer>
    <experiments>3</experiments>
</comment>
<comment type="interaction">
    <interactant intactId="EBI-12019838">
        <id>Q9P1A6-3</id>
    </interactant>
    <interactant intactId="EBI-80440">
        <id>Q92796</id>
        <label>DLG3</label>
    </interactant>
    <organismsDiffer>false</organismsDiffer>
    <experiments>3</experiments>
</comment>
<comment type="interaction">
    <interactant intactId="EBI-12019838">
        <id>Q9P1A6-3</id>
    </interactant>
    <interactant intactId="EBI-747754">
        <id>P28799</id>
        <label>GRN</label>
    </interactant>
    <organismsDiffer>false</organismsDiffer>
    <experiments>3</experiments>
</comment>
<comment type="interaction">
    <interactant intactId="EBI-12019838">
        <id>Q9P1A6-3</id>
    </interactant>
    <interactant intactId="EBI-10975473">
        <id>O60333-2</id>
        <label>KIF1B</label>
    </interactant>
    <organismsDiffer>false</organismsDiffer>
    <experiments>3</experiments>
</comment>
<comment type="interaction">
    <interactant intactId="EBI-12019838">
        <id>Q9P1A6-3</id>
    </interactant>
    <interactant intactId="EBI-12081182">
        <id>Q86UL8-2</id>
        <label>MAGI2</label>
    </interactant>
    <organismsDiffer>false</organismsDiffer>
    <experiments>3</experiments>
</comment>
<comment type="interaction">
    <interactant intactId="EBI-12019838">
        <id>Q9P1A6-3</id>
    </interactant>
    <interactant intactId="EBI-1380492">
        <id>Q8TF42</id>
        <label>UBASH3B</label>
    </interactant>
    <organismsDiffer>false</organismsDiffer>
    <experiments>3</experiments>
</comment>
<comment type="interaction">
    <interactant intactId="EBI-12019838">
        <id>Q9P1A6-3</id>
    </interactant>
    <interactant intactId="EBI-720609">
        <id>O76024</id>
        <label>WFS1</label>
    </interactant>
    <organismsDiffer>false</organismsDiffer>
    <experiments>3</experiments>
</comment>
<comment type="subcellular location">
    <subcellularLocation>
        <location evidence="1">Cell membrane</location>
        <topology evidence="1">Peripheral membrane protein</topology>
    </subcellularLocation>
    <subcellularLocation>
        <location evidence="1">Postsynaptic density</location>
    </subcellularLocation>
    <subcellularLocation>
        <location evidence="1">Synapse</location>
    </subcellularLocation>
    <text evidence="1">Postsynaptic density of neuronal cells.</text>
</comment>
<comment type="alternative products">
    <event type="alternative splicing"/>
    <isoform>
        <id>Q9P1A6-1</id>
        <name>1</name>
        <sequence type="displayed"/>
    </isoform>
    <isoform>
        <id>Q9P1A6-2</id>
        <name>2</name>
        <sequence type="described" ref="VSP_006012"/>
    </isoform>
    <isoform>
        <id>Q9P1A6-3</id>
        <name>3</name>
        <sequence type="described" ref="VSP_006011"/>
    </isoform>
</comment>
<comment type="tissue specificity">
    <text>Expressed in brain and kidney.</text>
</comment>
<comment type="similarity">
    <text evidence="8">Belongs to the SAPAP family.</text>
</comment>
<comment type="sequence caution" evidence="8">
    <conflict type="erroneous gene model prediction">
        <sequence resource="EMBL-CDS" id="EAW51475"/>
    </conflict>
</comment>
<accession>Q9P1A6</accession>
<accession>A1QCF8</accession>
<accession>A1QCF9</accession>
<accession>A5D8Y2</accession>
<accession>O14488</accession>
<accession>O14664</accession>
<accession>Q9P1A7</accession>
<organism>
    <name type="scientific">Homo sapiens</name>
    <name type="common">Human</name>
    <dbReference type="NCBI Taxonomy" id="9606"/>
    <lineage>
        <taxon>Eukaryota</taxon>
        <taxon>Metazoa</taxon>
        <taxon>Chordata</taxon>
        <taxon>Craniata</taxon>
        <taxon>Vertebrata</taxon>
        <taxon>Euteleostomi</taxon>
        <taxon>Mammalia</taxon>
        <taxon>Eutheria</taxon>
        <taxon>Euarchontoglires</taxon>
        <taxon>Primates</taxon>
        <taxon>Haplorrhini</taxon>
        <taxon>Catarrhini</taxon>
        <taxon>Hominidae</taxon>
        <taxon>Homo</taxon>
    </lineage>
</organism>
<gene>
    <name evidence="9" type="primary">DLGAP2</name>
    <name evidence="9" type="synonym">C8orf68</name>
    <name type="synonym">DAP2</name>
    <name evidence="9" type="synonym">ERICH1-AS1</name>
</gene>
<keyword id="KW-0025">Alternative splicing</keyword>
<keyword id="KW-1003">Cell membrane</keyword>
<keyword id="KW-0472">Membrane</keyword>
<keyword id="KW-0597">Phosphoprotein</keyword>
<keyword id="KW-1267">Proteomics identification</keyword>
<keyword id="KW-1185">Reference proteome</keyword>
<keyword id="KW-0770">Synapse</keyword>